<evidence type="ECO:0000250" key="1"/>
<evidence type="ECO:0000269" key="2">
    <source>
    </source>
</evidence>
<evidence type="ECO:0000269" key="3">
    <source>
    </source>
</evidence>
<evidence type="ECO:0000269" key="4">
    <source>
    </source>
</evidence>
<evidence type="ECO:0000269" key="5">
    <source>
    </source>
</evidence>
<evidence type="ECO:0000269" key="6">
    <source>
    </source>
</evidence>
<evidence type="ECO:0000305" key="7"/>
<proteinExistence type="evidence at protein level"/>
<name>DCC1_HUMAN</name>
<protein>
    <recommendedName>
        <fullName>Sister chromatid cohesion protein DCC1</fullName>
    </recommendedName>
    <alternativeName>
        <fullName>Defective in sister chromatid cohesion protein 1 homolog</fullName>
    </alternativeName>
</protein>
<feature type="chain" id="PRO_0000318064" description="Sister chromatid cohesion protein DCC1">
    <location>
        <begin position="1"/>
        <end position="393"/>
    </location>
</feature>
<feature type="sequence variant" id="VAR_038682" description="In dbSNP:rs1055130." evidence="3 4">
    <original>H</original>
    <variation>R</variation>
    <location>
        <position position="376"/>
    </location>
</feature>
<keyword id="KW-0131">Cell cycle</keyword>
<keyword id="KW-0235">DNA replication</keyword>
<keyword id="KW-0238">DNA-binding</keyword>
<keyword id="KW-0539">Nucleus</keyword>
<keyword id="KW-1267">Proteomics identification</keyword>
<keyword id="KW-1185">Reference proteome</keyword>
<comment type="function">
    <text evidence="2 6">Loads PCNA onto primed templates regulating velocity, spacing and restart activity of replication forks. May couple DNA replication to sister chromatid cohesion through regulation of the acetylation of the cohesin subunit SMC3.</text>
</comment>
<comment type="subunit">
    <text evidence="2 5">Component of the CTF18-RFC complex which consists of CTF8, CTF18, DSCC1 and the RFC complex (PubMed:12766176). Interacts with CTF8 and CTF18 (PubMed:12766176). Interacts with DDX11 (PubMed:18499658).</text>
</comment>
<comment type="interaction">
    <interactant intactId="EBI-11143782">
        <id>Q9BVC3</id>
    </interactant>
    <interactant intactId="EBI-348399">
        <id>P22607</id>
        <label>FGFR3</label>
    </interactant>
    <organismsDiffer>false</organismsDiffer>
    <experiments>3</experiments>
</comment>
<comment type="interaction">
    <interactant intactId="EBI-11143782">
        <id>Q9BVC3</id>
    </interactant>
    <interactant intactId="EBI-727304">
        <id>Q8TBE7</id>
        <label>SLC35G2</label>
    </interactant>
    <organismsDiffer>false</organismsDiffer>
    <experiments>2</experiments>
</comment>
<comment type="interaction">
    <interactant intactId="EBI-11143782">
        <id>Q9BVC3</id>
    </interactant>
    <interactant intactId="EBI-741480">
        <id>Q9UMX0</id>
        <label>UBQLN1</label>
    </interactant>
    <organismsDiffer>false</organismsDiffer>
    <experiments>3</experiments>
</comment>
<comment type="subcellular location">
    <subcellularLocation>
        <location evidence="1">Nucleus</location>
    </subcellularLocation>
</comment>
<comment type="similarity">
    <text evidence="7">Belongs to the DCC1 family.</text>
</comment>
<accession>Q9BVC3</accession>
<accession>Q969N5</accession>
<gene>
    <name type="primary">DSCC1</name>
    <name type="synonym">DCC1</name>
    <name type="ORF">UNQ9337/PRO34008</name>
</gene>
<reference key="1">
    <citation type="journal article" date="2003" name="Genome Res.">
        <title>The secreted protein discovery initiative (SPDI), a large-scale effort to identify novel human secreted and transmembrane proteins: a bioinformatics assessment.</title>
        <authorList>
            <person name="Clark H.F."/>
            <person name="Gurney A.L."/>
            <person name="Abaya E."/>
            <person name="Baker K."/>
            <person name="Baldwin D.T."/>
            <person name="Brush J."/>
            <person name="Chen J."/>
            <person name="Chow B."/>
            <person name="Chui C."/>
            <person name="Crowley C."/>
            <person name="Currell B."/>
            <person name="Deuel B."/>
            <person name="Dowd P."/>
            <person name="Eaton D."/>
            <person name="Foster J.S."/>
            <person name="Grimaldi C."/>
            <person name="Gu Q."/>
            <person name="Hass P.E."/>
            <person name="Heldens S."/>
            <person name="Huang A."/>
            <person name="Kim H.S."/>
            <person name="Klimowski L."/>
            <person name="Jin Y."/>
            <person name="Johnson S."/>
            <person name="Lee J."/>
            <person name="Lewis L."/>
            <person name="Liao D."/>
            <person name="Mark M.R."/>
            <person name="Robbie E."/>
            <person name="Sanchez C."/>
            <person name="Schoenfeld J."/>
            <person name="Seshagiri S."/>
            <person name="Simmons L."/>
            <person name="Singh J."/>
            <person name="Smith V."/>
            <person name="Stinson J."/>
            <person name="Vagts A."/>
            <person name="Vandlen R.L."/>
            <person name="Watanabe C."/>
            <person name="Wieand D."/>
            <person name="Woods K."/>
            <person name="Xie M.-H."/>
            <person name="Yansura D.G."/>
            <person name="Yi S."/>
            <person name="Yu G."/>
            <person name="Yuan J."/>
            <person name="Zhang M."/>
            <person name="Zhang Z."/>
            <person name="Goddard A.D."/>
            <person name="Wood W.I."/>
            <person name="Godowski P.J."/>
            <person name="Gray A.M."/>
        </authorList>
    </citation>
    <scope>NUCLEOTIDE SEQUENCE [LARGE SCALE MRNA]</scope>
    <scope>VARIANT ARG-376</scope>
</reference>
<reference key="2">
    <citation type="journal article" date="2004" name="Nat. Genet.">
        <title>Complete sequencing and characterization of 21,243 full-length human cDNAs.</title>
        <authorList>
            <person name="Ota T."/>
            <person name="Suzuki Y."/>
            <person name="Nishikawa T."/>
            <person name="Otsuki T."/>
            <person name="Sugiyama T."/>
            <person name="Irie R."/>
            <person name="Wakamatsu A."/>
            <person name="Hayashi K."/>
            <person name="Sato H."/>
            <person name="Nagai K."/>
            <person name="Kimura K."/>
            <person name="Makita H."/>
            <person name="Sekine M."/>
            <person name="Obayashi M."/>
            <person name="Nishi T."/>
            <person name="Shibahara T."/>
            <person name="Tanaka T."/>
            <person name="Ishii S."/>
            <person name="Yamamoto J."/>
            <person name="Saito K."/>
            <person name="Kawai Y."/>
            <person name="Isono Y."/>
            <person name="Nakamura Y."/>
            <person name="Nagahari K."/>
            <person name="Murakami K."/>
            <person name="Yasuda T."/>
            <person name="Iwayanagi T."/>
            <person name="Wagatsuma M."/>
            <person name="Shiratori A."/>
            <person name="Sudo H."/>
            <person name="Hosoiri T."/>
            <person name="Kaku Y."/>
            <person name="Kodaira H."/>
            <person name="Kondo H."/>
            <person name="Sugawara M."/>
            <person name="Takahashi M."/>
            <person name="Kanda K."/>
            <person name="Yokoi T."/>
            <person name="Furuya T."/>
            <person name="Kikkawa E."/>
            <person name="Omura Y."/>
            <person name="Abe K."/>
            <person name="Kamihara K."/>
            <person name="Katsuta N."/>
            <person name="Sato K."/>
            <person name="Tanikawa M."/>
            <person name="Yamazaki M."/>
            <person name="Ninomiya K."/>
            <person name="Ishibashi T."/>
            <person name="Yamashita H."/>
            <person name="Murakawa K."/>
            <person name="Fujimori K."/>
            <person name="Tanai H."/>
            <person name="Kimata M."/>
            <person name="Watanabe M."/>
            <person name="Hiraoka S."/>
            <person name="Chiba Y."/>
            <person name="Ishida S."/>
            <person name="Ono Y."/>
            <person name="Takiguchi S."/>
            <person name="Watanabe S."/>
            <person name="Yosida M."/>
            <person name="Hotuta T."/>
            <person name="Kusano J."/>
            <person name="Kanehori K."/>
            <person name="Takahashi-Fujii A."/>
            <person name="Hara H."/>
            <person name="Tanase T.-O."/>
            <person name="Nomura Y."/>
            <person name="Togiya S."/>
            <person name="Komai F."/>
            <person name="Hara R."/>
            <person name="Takeuchi K."/>
            <person name="Arita M."/>
            <person name="Imose N."/>
            <person name="Musashino K."/>
            <person name="Yuuki H."/>
            <person name="Oshima A."/>
            <person name="Sasaki N."/>
            <person name="Aotsuka S."/>
            <person name="Yoshikawa Y."/>
            <person name="Matsunawa H."/>
            <person name="Ichihara T."/>
            <person name="Shiohata N."/>
            <person name="Sano S."/>
            <person name="Moriya S."/>
            <person name="Momiyama H."/>
            <person name="Satoh N."/>
            <person name="Takami S."/>
            <person name="Terashima Y."/>
            <person name="Suzuki O."/>
            <person name="Nakagawa S."/>
            <person name="Senoh A."/>
            <person name="Mizoguchi H."/>
            <person name="Goto Y."/>
            <person name="Shimizu F."/>
            <person name="Wakebe H."/>
            <person name="Hishigaki H."/>
            <person name="Watanabe T."/>
            <person name="Sugiyama A."/>
            <person name="Takemoto M."/>
            <person name="Kawakami B."/>
            <person name="Yamazaki M."/>
            <person name="Watanabe K."/>
            <person name="Kumagai A."/>
            <person name="Itakura S."/>
            <person name="Fukuzumi Y."/>
            <person name="Fujimori Y."/>
            <person name="Komiyama M."/>
            <person name="Tashiro H."/>
            <person name="Tanigami A."/>
            <person name="Fujiwara T."/>
            <person name="Ono T."/>
            <person name="Yamada K."/>
            <person name="Fujii Y."/>
            <person name="Ozaki K."/>
            <person name="Hirao M."/>
            <person name="Ohmori Y."/>
            <person name="Kawabata A."/>
            <person name="Hikiji T."/>
            <person name="Kobatake N."/>
            <person name="Inagaki H."/>
            <person name="Ikema Y."/>
            <person name="Okamoto S."/>
            <person name="Okitani R."/>
            <person name="Kawakami T."/>
            <person name="Noguchi S."/>
            <person name="Itoh T."/>
            <person name="Shigeta K."/>
            <person name="Senba T."/>
            <person name="Matsumura K."/>
            <person name="Nakajima Y."/>
            <person name="Mizuno T."/>
            <person name="Morinaga M."/>
            <person name="Sasaki M."/>
            <person name="Togashi T."/>
            <person name="Oyama M."/>
            <person name="Hata H."/>
            <person name="Watanabe M."/>
            <person name="Komatsu T."/>
            <person name="Mizushima-Sugano J."/>
            <person name="Satoh T."/>
            <person name="Shirai Y."/>
            <person name="Takahashi Y."/>
            <person name="Nakagawa K."/>
            <person name="Okumura K."/>
            <person name="Nagase T."/>
            <person name="Nomura N."/>
            <person name="Kikuchi H."/>
            <person name="Masuho Y."/>
            <person name="Yamashita R."/>
            <person name="Nakai K."/>
            <person name="Yada T."/>
            <person name="Nakamura Y."/>
            <person name="Ohara O."/>
            <person name="Isogai T."/>
            <person name="Sugano S."/>
        </authorList>
    </citation>
    <scope>NUCLEOTIDE SEQUENCE [LARGE SCALE MRNA]</scope>
</reference>
<reference key="3">
    <citation type="journal article" date="2004" name="Genome Res.">
        <title>The status, quality, and expansion of the NIH full-length cDNA project: the Mammalian Gene Collection (MGC).</title>
        <authorList>
            <consortium name="The MGC Project Team"/>
        </authorList>
    </citation>
    <scope>NUCLEOTIDE SEQUENCE [LARGE SCALE MRNA]</scope>
    <scope>VARIANT ARG-376</scope>
    <source>
        <tissue>Brain</tissue>
        <tissue>Placenta</tissue>
    </source>
</reference>
<reference key="4">
    <citation type="journal article" date="2003" name="J. Biol. Chem.">
        <title>Cloning and characterization of hCTF18, hCTF8, and hDCC1. Human homologs of a Saccharomyces cerevisiae complex involved in sister chromatid cohesion establishment.</title>
        <authorList>
            <person name="Merkle C.J."/>
            <person name="Karnitz L.M."/>
            <person name="Henry-Sanchez J.T."/>
            <person name="Chen J."/>
        </authorList>
    </citation>
    <scope>FUNCTION</scope>
    <scope>INTERACTION WITH CTF8 AND CTF18</scope>
</reference>
<reference key="5">
    <citation type="journal article" date="2008" name="J. Biol. Chem.">
        <title>Studies with the human cohesin establishment factor, ChlR1. Association of ChlR1 with Ctf18-RFC and Fen1.</title>
        <authorList>
            <person name="Farina A."/>
            <person name="Shin J.H."/>
            <person name="Kim D.H."/>
            <person name="Bermudez V.P."/>
            <person name="Kelman Z."/>
            <person name="Seo Y.S."/>
            <person name="Hurwitz J."/>
        </authorList>
    </citation>
    <scope>INTERACTION WITH DDX11</scope>
</reference>
<reference key="6">
    <citation type="journal article" date="2009" name="Nature">
        <title>Cohesin acetylation speeds the replication fork.</title>
        <authorList>
            <person name="Terret M.E."/>
            <person name="Sherwood R."/>
            <person name="Rahman S."/>
            <person name="Qin J."/>
            <person name="Jallepalli P.V."/>
        </authorList>
    </citation>
    <scope>FUNCTION IN DNA REPLICATION AND SISTER CHROMATID COHESION</scope>
</reference>
<reference key="7">
    <citation type="journal article" date="2011" name="BMC Syst. Biol.">
        <title>Initial characterization of the human central proteome.</title>
        <authorList>
            <person name="Burkard T.R."/>
            <person name="Planyavsky M."/>
            <person name="Kaupe I."/>
            <person name="Breitwieser F.P."/>
            <person name="Buerckstuemmer T."/>
            <person name="Bennett K.L."/>
            <person name="Superti-Furga G."/>
            <person name="Colinge J."/>
        </authorList>
    </citation>
    <scope>IDENTIFICATION BY MASS SPECTROMETRY [LARGE SCALE ANALYSIS]</scope>
</reference>
<organism>
    <name type="scientific">Homo sapiens</name>
    <name type="common">Human</name>
    <dbReference type="NCBI Taxonomy" id="9606"/>
    <lineage>
        <taxon>Eukaryota</taxon>
        <taxon>Metazoa</taxon>
        <taxon>Chordata</taxon>
        <taxon>Craniata</taxon>
        <taxon>Vertebrata</taxon>
        <taxon>Euteleostomi</taxon>
        <taxon>Mammalia</taxon>
        <taxon>Eutheria</taxon>
        <taxon>Euarchontoglires</taxon>
        <taxon>Primates</taxon>
        <taxon>Haplorrhini</taxon>
        <taxon>Catarrhini</taxon>
        <taxon>Hominidae</taxon>
        <taxon>Homo</taxon>
    </lineage>
</organism>
<dbReference type="EMBL" id="AY358866">
    <property type="protein sequence ID" value="AAQ89225.1"/>
    <property type="molecule type" value="mRNA"/>
</dbReference>
<dbReference type="EMBL" id="AK054585">
    <property type="protein sequence ID" value="BAB70767.1"/>
    <property type="molecule type" value="mRNA"/>
</dbReference>
<dbReference type="EMBL" id="BC001316">
    <property type="protein sequence ID" value="AAH01316.1"/>
    <property type="molecule type" value="mRNA"/>
</dbReference>
<dbReference type="EMBL" id="BC001531">
    <property type="protein sequence ID" value="AAH01531.1"/>
    <property type="molecule type" value="mRNA"/>
</dbReference>
<dbReference type="CCDS" id="CCDS6330.1"/>
<dbReference type="RefSeq" id="NP_076999.2">
    <property type="nucleotide sequence ID" value="NM_024094.3"/>
</dbReference>
<dbReference type="SMR" id="Q9BVC3"/>
<dbReference type="BioGRID" id="122526">
    <property type="interactions" value="67"/>
</dbReference>
<dbReference type="CORUM" id="Q9BVC3"/>
<dbReference type="FunCoup" id="Q9BVC3">
    <property type="interactions" value="1856"/>
</dbReference>
<dbReference type="IntAct" id="Q9BVC3">
    <property type="interactions" value="41"/>
</dbReference>
<dbReference type="STRING" id="9606.ENSP00000322180"/>
<dbReference type="iPTMnet" id="Q9BVC3"/>
<dbReference type="MetOSite" id="Q9BVC3"/>
<dbReference type="PhosphoSitePlus" id="Q9BVC3"/>
<dbReference type="BioMuta" id="DSCC1"/>
<dbReference type="DMDM" id="167012058"/>
<dbReference type="jPOST" id="Q9BVC3"/>
<dbReference type="MassIVE" id="Q9BVC3"/>
<dbReference type="PaxDb" id="9606-ENSP00000322180"/>
<dbReference type="PeptideAtlas" id="Q9BVC3"/>
<dbReference type="ProteomicsDB" id="79193"/>
<dbReference type="Pumba" id="Q9BVC3"/>
<dbReference type="TopDownProteomics" id="Q9BVC3"/>
<dbReference type="Antibodypedia" id="26822">
    <property type="antibodies" value="203 antibodies from 23 providers"/>
</dbReference>
<dbReference type="DNASU" id="79075"/>
<dbReference type="Ensembl" id="ENST00000313655.5">
    <property type="protein sequence ID" value="ENSP00000322180.4"/>
    <property type="gene ID" value="ENSG00000136982.6"/>
</dbReference>
<dbReference type="GeneID" id="79075"/>
<dbReference type="KEGG" id="hsa:79075"/>
<dbReference type="MANE-Select" id="ENST00000313655.5">
    <property type="protein sequence ID" value="ENSP00000322180.4"/>
    <property type="RefSeq nucleotide sequence ID" value="NM_024094.3"/>
    <property type="RefSeq protein sequence ID" value="NP_076999.2"/>
</dbReference>
<dbReference type="UCSC" id="uc003yov.4">
    <property type="organism name" value="human"/>
</dbReference>
<dbReference type="AGR" id="HGNC:24453"/>
<dbReference type="CTD" id="79075"/>
<dbReference type="DisGeNET" id="79075"/>
<dbReference type="GeneCards" id="DSCC1"/>
<dbReference type="HGNC" id="HGNC:24453">
    <property type="gene designation" value="DSCC1"/>
</dbReference>
<dbReference type="HPA" id="ENSG00000136982">
    <property type="expression patterns" value="Tissue enhanced (lymphoid)"/>
</dbReference>
<dbReference type="MIM" id="613203">
    <property type="type" value="gene"/>
</dbReference>
<dbReference type="neXtProt" id="NX_Q9BVC3"/>
<dbReference type="OpenTargets" id="ENSG00000136982"/>
<dbReference type="PharmGKB" id="PA162384079"/>
<dbReference type="VEuPathDB" id="HostDB:ENSG00000136982"/>
<dbReference type="eggNOG" id="KOG0798">
    <property type="taxonomic scope" value="Eukaryota"/>
</dbReference>
<dbReference type="GeneTree" id="ENSGT00390000017400"/>
<dbReference type="HOGENOM" id="CLU_034504_1_1_1"/>
<dbReference type="InParanoid" id="Q9BVC3"/>
<dbReference type="OMA" id="DSESWPF"/>
<dbReference type="OrthoDB" id="5199543at2759"/>
<dbReference type="PAN-GO" id="Q9BVC3">
    <property type="GO annotations" value="5 GO annotations based on evolutionary models"/>
</dbReference>
<dbReference type="PhylomeDB" id="Q9BVC3"/>
<dbReference type="TreeFam" id="TF106104"/>
<dbReference type="PathwayCommons" id="Q9BVC3"/>
<dbReference type="Reactome" id="R-HSA-174411">
    <property type="pathway name" value="Polymerase switching on the C-strand of the telomere"/>
</dbReference>
<dbReference type="SignaLink" id="Q9BVC3"/>
<dbReference type="BioGRID-ORCS" id="79075">
    <property type="hits" value="186 hits in 1161 CRISPR screens"/>
</dbReference>
<dbReference type="ChiTaRS" id="DSCC1">
    <property type="organism name" value="human"/>
</dbReference>
<dbReference type="GeneWiki" id="DCC1"/>
<dbReference type="GenomeRNAi" id="79075"/>
<dbReference type="Pharos" id="Q9BVC3">
    <property type="development level" value="Tbio"/>
</dbReference>
<dbReference type="PRO" id="PR:Q9BVC3"/>
<dbReference type="Proteomes" id="UP000005640">
    <property type="component" value="Chromosome 8"/>
</dbReference>
<dbReference type="RNAct" id="Q9BVC3">
    <property type="molecule type" value="protein"/>
</dbReference>
<dbReference type="Bgee" id="ENSG00000136982">
    <property type="expression patterns" value="Expressed in secondary oocyte and 189 other cell types or tissues"/>
</dbReference>
<dbReference type="GO" id="GO:0000785">
    <property type="term" value="C:chromatin"/>
    <property type="evidence" value="ECO:0000314"/>
    <property type="project" value="UniProtKB"/>
</dbReference>
<dbReference type="GO" id="GO:0000775">
    <property type="term" value="C:chromosome, centromeric region"/>
    <property type="evidence" value="ECO:0000314"/>
    <property type="project" value="UniProtKB"/>
</dbReference>
<dbReference type="GO" id="GO:0031390">
    <property type="term" value="C:Ctf18 RFC-like complex"/>
    <property type="evidence" value="ECO:0000314"/>
    <property type="project" value="UniProtKB"/>
</dbReference>
<dbReference type="GO" id="GO:0005654">
    <property type="term" value="C:nucleoplasm"/>
    <property type="evidence" value="ECO:0000314"/>
    <property type="project" value="UniProtKB"/>
</dbReference>
<dbReference type="GO" id="GO:0003677">
    <property type="term" value="F:DNA binding"/>
    <property type="evidence" value="ECO:0007669"/>
    <property type="project" value="UniProtKB-KW"/>
</dbReference>
<dbReference type="GO" id="GO:0006260">
    <property type="term" value="P:DNA replication"/>
    <property type="evidence" value="ECO:0007669"/>
    <property type="project" value="UniProtKB-KW"/>
</dbReference>
<dbReference type="GO" id="GO:0034088">
    <property type="term" value="P:maintenance of mitotic sister chromatid cohesion"/>
    <property type="evidence" value="ECO:0000315"/>
    <property type="project" value="UniProtKB"/>
</dbReference>
<dbReference type="GO" id="GO:1900264">
    <property type="term" value="P:positive regulation of DNA-directed DNA polymerase activity"/>
    <property type="evidence" value="ECO:0000314"/>
    <property type="project" value="UniProtKB"/>
</dbReference>
<dbReference type="GO" id="GO:0034421">
    <property type="term" value="P:post-translational protein acetylation"/>
    <property type="evidence" value="ECO:0000315"/>
    <property type="project" value="UniProtKB"/>
</dbReference>
<dbReference type="GO" id="GO:0006275">
    <property type="term" value="P:regulation of DNA replication"/>
    <property type="evidence" value="ECO:0000315"/>
    <property type="project" value="UniProtKB"/>
</dbReference>
<dbReference type="InterPro" id="IPR019128">
    <property type="entry name" value="Dcc1"/>
</dbReference>
<dbReference type="PANTHER" id="PTHR13395:SF6">
    <property type="entry name" value="SISTER CHROMATID COHESION PROTEIN DCC1"/>
    <property type="match status" value="1"/>
</dbReference>
<dbReference type="PANTHER" id="PTHR13395">
    <property type="entry name" value="SISTER CHROMATID COHESION PROTEIN DCC1-RELATED"/>
    <property type="match status" value="1"/>
</dbReference>
<dbReference type="Pfam" id="PF09724">
    <property type="entry name" value="Dcc1"/>
    <property type="match status" value="1"/>
</dbReference>
<sequence length="393" mass="44825">MKRTRDEVDATLQIAKLNAAELLPAVHCLGFGPGASGAAAGDFCLLELEPTLCQQLEDGHSLVIRGDKDEQAVLCSKDKTYDLKIADTSNMLLFIPGCKTPDQLKKEDSHCNIIHTEIFGFSNNYWELRRRRPKLKKLKKLLMENPYEGPDSQKEKDSNSSKYTTEDLLDQIQASEEEIMTQLQVLNACKIGGYWRILEFDYEMKLLNHVTQLVDSESWSFGKVPLNTCLQELGPLEPEEMIEHCLKCYGKKYVDEGEVYFELDADKICRAAARMLLQNAVKFNLAEFQEVWQQSVPEGMVTSLDQLKGLALVDRHSRPEIIFLLKVDDLPEDNQERFNSLFSLREKWTEEDIAPYIQDLCGEKQTIGALLTKYSHSSMQNGVKVYNSRRPIS</sequence>